<keyword id="KW-0067">ATP-binding</keyword>
<keyword id="KW-0175">Coiled coil</keyword>
<keyword id="KW-0547">Nucleotide-binding</keyword>
<keyword id="KW-0611">Plant defense</keyword>
<keyword id="KW-1185">Reference proteome</keyword>
<gene>
    <name type="ordered locus">At5g45490</name>
    <name type="ORF">MFC19.16</name>
</gene>
<name>DRL35_ARATH</name>
<sequence>MPSKNLQQAVLTNEFTTNFITTCKDWLDVNGLAKGNLEKKRDDNEEEERLKTESKLPGHDIHGFDNEIKSLQHFLLDQKVRREFKSLVIVGEYGVGKTALCQKIFNDEAVKSVYAPRVWVSMENKESKEGLDGKICVLKKILKGLGVEELILETISTDAKQEFKDNEEVASNQEAGEIDRETEKEKELSALLYALHLNLRWKKYLIVFDDVRENDNWDEKLDAKLKEDEKWGKYLSDGFPKGSGGRVIYTTRDENLAKNLVAQKHEIHRLWPLSDHQSVWKIYDAVVKDKQKESPRNDKKCIDELMNKSRGLPLAARLLAERDPVFVDDEVGPVGSTHGQTDSSNRQPANQASS</sequence>
<comment type="function">
    <text evidence="1">Possible disease resistance protein.</text>
</comment>
<comment type="caution">
    <text evidence="4">Although strongly related to the NB-LRR family, it is shorter and lacks the LRR repeats that are present in other proteins of the family.</text>
</comment>
<comment type="online information" name="NIB-LRRS">
    <link uri="http://niblrrs.ucdavis.edu"/>
    <text>Functional and comparative genomics of disease resistance gene homologs</text>
</comment>
<evidence type="ECO:0000250" key="1"/>
<evidence type="ECO:0000255" key="2"/>
<evidence type="ECO:0000256" key="3">
    <source>
        <dbReference type="SAM" id="MobiDB-lite"/>
    </source>
</evidence>
<evidence type="ECO:0000305" key="4"/>
<proteinExistence type="evidence at transcript level"/>
<protein>
    <recommendedName>
        <fullName>Probable disease resistance protein At5g45490</fullName>
    </recommendedName>
</protein>
<feature type="chain" id="PRO_0000212767" description="Probable disease resistance protein At5g45490">
    <location>
        <begin position="1"/>
        <end position="354"/>
    </location>
</feature>
<feature type="domain" description="NB-ARC">
    <location>
        <begin position="45"/>
        <end position="122"/>
    </location>
</feature>
<feature type="region of interest" description="Disordered" evidence="3">
    <location>
        <begin position="328"/>
        <end position="354"/>
    </location>
</feature>
<feature type="coiled-coil region" evidence="2">
    <location>
        <begin position="33"/>
        <end position="53"/>
    </location>
</feature>
<feature type="compositionally biased region" description="Polar residues" evidence="3">
    <location>
        <begin position="337"/>
        <end position="354"/>
    </location>
</feature>
<feature type="binding site" evidence="2">
    <location>
        <begin position="91"/>
        <end position="98"/>
    </location>
    <ligand>
        <name>ATP</name>
        <dbReference type="ChEBI" id="CHEBI:30616"/>
    </ligand>
</feature>
<dbReference type="EMBL" id="AB018113">
    <property type="protein sequence ID" value="BAB09177.1"/>
    <property type="molecule type" value="Genomic_DNA"/>
</dbReference>
<dbReference type="EMBL" id="CP002688">
    <property type="protein sequence ID" value="AED95258.1"/>
    <property type="molecule type" value="Genomic_DNA"/>
</dbReference>
<dbReference type="EMBL" id="CP002688">
    <property type="protein sequence ID" value="AED95259.1"/>
    <property type="molecule type" value="Genomic_DNA"/>
</dbReference>
<dbReference type="EMBL" id="AY065019">
    <property type="protein sequence ID" value="AAL57661.1"/>
    <property type="molecule type" value="mRNA"/>
</dbReference>
<dbReference type="EMBL" id="AY090327">
    <property type="protein sequence ID" value="AAL90988.1"/>
    <property type="molecule type" value="mRNA"/>
</dbReference>
<dbReference type="RefSeq" id="NP_001078718.1">
    <property type="nucleotide sequence ID" value="NM_001085249.1"/>
</dbReference>
<dbReference type="RefSeq" id="NP_199362.1">
    <property type="nucleotide sequence ID" value="NM_123917.4"/>
</dbReference>
<dbReference type="BioGRID" id="19834">
    <property type="interactions" value="2"/>
</dbReference>
<dbReference type="FunCoup" id="Q9FHI7">
    <property type="interactions" value="259"/>
</dbReference>
<dbReference type="IntAct" id="Q9FHI7">
    <property type="interactions" value="2"/>
</dbReference>
<dbReference type="STRING" id="3702.Q9FHI7"/>
<dbReference type="iPTMnet" id="Q9FHI7"/>
<dbReference type="PaxDb" id="3702-AT5G45490.1"/>
<dbReference type="ProteomicsDB" id="224333"/>
<dbReference type="EnsemblPlants" id="AT5G45490.1">
    <property type="protein sequence ID" value="AT5G45490.1"/>
    <property type="gene ID" value="AT5G45490"/>
</dbReference>
<dbReference type="EnsemblPlants" id="AT5G45490.2">
    <property type="protein sequence ID" value="AT5G45490.2"/>
    <property type="gene ID" value="AT5G45490"/>
</dbReference>
<dbReference type="GeneID" id="834585"/>
<dbReference type="Gramene" id="AT5G45490.1">
    <property type="protein sequence ID" value="AT5G45490.1"/>
    <property type="gene ID" value="AT5G45490"/>
</dbReference>
<dbReference type="Gramene" id="AT5G45490.2">
    <property type="protein sequence ID" value="AT5G45490.2"/>
    <property type="gene ID" value="AT5G45490"/>
</dbReference>
<dbReference type="KEGG" id="ath:AT5G45490"/>
<dbReference type="Araport" id="AT5G45490"/>
<dbReference type="TAIR" id="AT5G45490"/>
<dbReference type="eggNOG" id="ENOG502RPBY">
    <property type="taxonomic scope" value="Eukaryota"/>
</dbReference>
<dbReference type="HOGENOM" id="CLU_740453_0_0_1"/>
<dbReference type="InParanoid" id="Q9FHI7"/>
<dbReference type="OMA" id="YAPRVWV"/>
<dbReference type="PhylomeDB" id="Q9FHI7"/>
<dbReference type="PRO" id="PR:Q9FHI7"/>
<dbReference type="Proteomes" id="UP000006548">
    <property type="component" value="Chromosome 5"/>
</dbReference>
<dbReference type="GO" id="GO:0043531">
    <property type="term" value="F:ADP binding"/>
    <property type="evidence" value="ECO:0007669"/>
    <property type="project" value="InterPro"/>
</dbReference>
<dbReference type="GO" id="GO:0005524">
    <property type="term" value="F:ATP binding"/>
    <property type="evidence" value="ECO:0007669"/>
    <property type="project" value="UniProtKB-KW"/>
</dbReference>
<dbReference type="GO" id="GO:0006952">
    <property type="term" value="P:defense response"/>
    <property type="evidence" value="ECO:0007669"/>
    <property type="project" value="UniProtKB-KW"/>
</dbReference>
<dbReference type="Gene3D" id="3.40.50.300">
    <property type="entry name" value="P-loop containing nucleotide triphosphate hydrolases"/>
    <property type="match status" value="1"/>
</dbReference>
<dbReference type="InterPro" id="IPR002182">
    <property type="entry name" value="NB-ARC"/>
</dbReference>
<dbReference type="InterPro" id="IPR027417">
    <property type="entry name" value="P-loop_NTPase"/>
</dbReference>
<dbReference type="PANTHER" id="PTHR36766:SF70">
    <property type="entry name" value="DISEASE RESISTANCE PROTEIN RGA4"/>
    <property type="match status" value="1"/>
</dbReference>
<dbReference type="PANTHER" id="PTHR36766">
    <property type="entry name" value="PLANT BROAD-SPECTRUM MILDEW RESISTANCE PROTEIN RPW8"/>
    <property type="match status" value="1"/>
</dbReference>
<dbReference type="Pfam" id="PF00931">
    <property type="entry name" value="NB-ARC"/>
    <property type="match status" value="1"/>
</dbReference>
<dbReference type="SUPFAM" id="SSF52540">
    <property type="entry name" value="P-loop containing nucleoside triphosphate hydrolases"/>
    <property type="match status" value="1"/>
</dbReference>
<accession>Q9FHI7</accession>
<reference key="1">
    <citation type="journal article" date="1999" name="DNA Res.">
        <title>Structural analysis of Arabidopsis thaliana chromosome 5. IX. Sequence features of the regions of 1,011,550 bp covered by seventeen P1 and TAC clones.</title>
        <authorList>
            <person name="Kaneko T."/>
            <person name="Katoh T."/>
            <person name="Sato S."/>
            <person name="Nakamura Y."/>
            <person name="Asamizu E."/>
            <person name="Kotani H."/>
            <person name="Miyajima N."/>
            <person name="Tabata S."/>
        </authorList>
    </citation>
    <scope>NUCLEOTIDE SEQUENCE [LARGE SCALE GENOMIC DNA]</scope>
    <source>
        <strain>cv. Columbia</strain>
    </source>
</reference>
<reference key="2">
    <citation type="journal article" date="2017" name="Plant J.">
        <title>Araport11: a complete reannotation of the Arabidopsis thaliana reference genome.</title>
        <authorList>
            <person name="Cheng C.Y."/>
            <person name="Krishnakumar V."/>
            <person name="Chan A.P."/>
            <person name="Thibaud-Nissen F."/>
            <person name="Schobel S."/>
            <person name="Town C.D."/>
        </authorList>
    </citation>
    <scope>GENOME REANNOTATION</scope>
    <source>
        <strain>cv. Columbia</strain>
    </source>
</reference>
<reference key="3">
    <citation type="journal article" date="2003" name="Science">
        <title>Empirical analysis of transcriptional activity in the Arabidopsis genome.</title>
        <authorList>
            <person name="Yamada K."/>
            <person name="Lim J."/>
            <person name="Dale J.M."/>
            <person name="Chen H."/>
            <person name="Shinn P."/>
            <person name="Palm C.J."/>
            <person name="Southwick A.M."/>
            <person name="Wu H.C."/>
            <person name="Kim C.J."/>
            <person name="Nguyen M."/>
            <person name="Pham P.K."/>
            <person name="Cheuk R.F."/>
            <person name="Karlin-Newmann G."/>
            <person name="Liu S.X."/>
            <person name="Lam B."/>
            <person name="Sakano H."/>
            <person name="Wu T."/>
            <person name="Yu G."/>
            <person name="Miranda M."/>
            <person name="Quach H.L."/>
            <person name="Tripp M."/>
            <person name="Chang C.H."/>
            <person name="Lee J.M."/>
            <person name="Toriumi M.J."/>
            <person name="Chan M.M."/>
            <person name="Tang C.C."/>
            <person name="Onodera C.S."/>
            <person name="Deng J.M."/>
            <person name="Akiyama K."/>
            <person name="Ansari Y."/>
            <person name="Arakawa T."/>
            <person name="Banh J."/>
            <person name="Banno F."/>
            <person name="Bowser L."/>
            <person name="Brooks S.Y."/>
            <person name="Carninci P."/>
            <person name="Chao Q."/>
            <person name="Choy N."/>
            <person name="Enju A."/>
            <person name="Goldsmith A.D."/>
            <person name="Gurjal M."/>
            <person name="Hansen N.F."/>
            <person name="Hayashizaki Y."/>
            <person name="Johnson-Hopson C."/>
            <person name="Hsuan V.W."/>
            <person name="Iida K."/>
            <person name="Karnes M."/>
            <person name="Khan S."/>
            <person name="Koesema E."/>
            <person name="Ishida J."/>
            <person name="Jiang P.X."/>
            <person name="Jones T."/>
            <person name="Kawai J."/>
            <person name="Kamiya A."/>
            <person name="Meyers C."/>
            <person name="Nakajima M."/>
            <person name="Narusaka M."/>
            <person name="Seki M."/>
            <person name="Sakurai T."/>
            <person name="Satou M."/>
            <person name="Tamse R."/>
            <person name="Vaysberg M."/>
            <person name="Wallender E.K."/>
            <person name="Wong C."/>
            <person name="Yamamura Y."/>
            <person name="Yuan S."/>
            <person name="Shinozaki K."/>
            <person name="Davis R.W."/>
            <person name="Theologis A."/>
            <person name="Ecker J.R."/>
        </authorList>
    </citation>
    <scope>NUCLEOTIDE SEQUENCE [LARGE SCALE MRNA]</scope>
    <source>
        <strain>cv. Columbia</strain>
    </source>
</reference>
<organism>
    <name type="scientific">Arabidopsis thaliana</name>
    <name type="common">Mouse-ear cress</name>
    <dbReference type="NCBI Taxonomy" id="3702"/>
    <lineage>
        <taxon>Eukaryota</taxon>
        <taxon>Viridiplantae</taxon>
        <taxon>Streptophyta</taxon>
        <taxon>Embryophyta</taxon>
        <taxon>Tracheophyta</taxon>
        <taxon>Spermatophyta</taxon>
        <taxon>Magnoliopsida</taxon>
        <taxon>eudicotyledons</taxon>
        <taxon>Gunneridae</taxon>
        <taxon>Pentapetalae</taxon>
        <taxon>rosids</taxon>
        <taxon>malvids</taxon>
        <taxon>Brassicales</taxon>
        <taxon>Brassicaceae</taxon>
        <taxon>Camelineae</taxon>
        <taxon>Arabidopsis</taxon>
    </lineage>
</organism>